<protein>
    <recommendedName>
        <fullName>Meteorin</fullName>
    </recommendedName>
    <alternativeName>
        <fullName>Hypoxia/reoxygenation regulatory factor</fullName>
    </alternativeName>
</protein>
<dbReference type="EMBL" id="AY800384">
    <property type="protein sequence ID" value="AAV74418.1"/>
    <property type="molecule type" value="mRNA"/>
</dbReference>
<dbReference type="RefSeq" id="NP_001009962.1">
    <property type="nucleotide sequence ID" value="NM_001009962.1"/>
</dbReference>
<dbReference type="SMR" id="Q5Q0T9"/>
<dbReference type="FunCoup" id="Q5Q0T9">
    <property type="interactions" value="966"/>
</dbReference>
<dbReference type="STRING" id="10116.ENSRNOP00000026676"/>
<dbReference type="PhosphoSitePlus" id="Q5Q0T9"/>
<dbReference type="PaxDb" id="10116-ENSRNOP00000026676"/>
<dbReference type="Ensembl" id="ENSRNOT00000026676.5">
    <property type="protein sequence ID" value="ENSRNOP00000026676.4"/>
    <property type="gene ID" value="ENSRNOG00000019692.5"/>
</dbReference>
<dbReference type="GeneID" id="287151"/>
<dbReference type="KEGG" id="rno:287151"/>
<dbReference type="UCSC" id="RGD:1306222">
    <property type="organism name" value="rat"/>
</dbReference>
<dbReference type="AGR" id="RGD:1306222"/>
<dbReference type="CTD" id="79006"/>
<dbReference type="RGD" id="1306222">
    <property type="gene designation" value="Metrn"/>
</dbReference>
<dbReference type="eggNOG" id="ENOG502QUQB">
    <property type="taxonomic scope" value="Eukaryota"/>
</dbReference>
<dbReference type="GeneTree" id="ENSGT00390000001390"/>
<dbReference type="HOGENOM" id="CLU_069970_0_0_1"/>
<dbReference type="InParanoid" id="Q5Q0T9"/>
<dbReference type="OMA" id="VHWGPRE"/>
<dbReference type="OrthoDB" id="6092325at2759"/>
<dbReference type="PhylomeDB" id="Q5Q0T9"/>
<dbReference type="TreeFam" id="TF330918"/>
<dbReference type="PRO" id="PR:Q5Q0T9"/>
<dbReference type="Proteomes" id="UP000002494">
    <property type="component" value="Chromosome 10"/>
</dbReference>
<dbReference type="Bgee" id="ENSRNOG00000019692">
    <property type="expression patterns" value="Expressed in frontal cortex and 19 other cell types or tissues"/>
</dbReference>
<dbReference type="GO" id="GO:0005615">
    <property type="term" value="C:extracellular space"/>
    <property type="evidence" value="ECO:0000266"/>
    <property type="project" value="RGD"/>
</dbReference>
<dbReference type="GO" id="GO:0005179">
    <property type="term" value="F:hormone activity"/>
    <property type="evidence" value="ECO:0000318"/>
    <property type="project" value="GO_Central"/>
</dbReference>
<dbReference type="GO" id="GO:0007409">
    <property type="term" value="P:axonogenesis"/>
    <property type="evidence" value="ECO:0000266"/>
    <property type="project" value="RGD"/>
</dbReference>
<dbReference type="GO" id="GO:0010001">
    <property type="term" value="P:glial cell differentiation"/>
    <property type="evidence" value="ECO:0000318"/>
    <property type="project" value="GO_Central"/>
</dbReference>
<dbReference type="GO" id="GO:0050772">
    <property type="term" value="P:positive regulation of axonogenesis"/>
    <property type="evidence" value="ECO:0000266"/>
    <property type="project" value="RGD"/>
</dbReference>
<dbReference type="GO" id="GO:0060019">
    <property type="term" value="P:radial glial cell differentiation"/>
    <property type="evidence" value="ECO:0000266"/>
    <property type="project" value="RGD"/>
</dbReference>
<dbReference type="InterPro" id="IPR051998">
    <property type="entry name" value="Meteorin-like"/>
</dbReference>
<dbReference type="PANTHER" id="PTHR28593:SF2">
    <property type="entry name" value="METEORIN"/>
    <property type="match status" value="1"/>
</dbReference>
<dbReference type="PANTHER" id="PTHR28593">
    <property type="entry name" value="METEORIN-LIKE PROTEIN"/>
    <property type="match status" value="1"/>
</dbReference>
<keyword id="KW-0217">Developmental protein</keyword>
<keyword id="KW-0221">Differentiation</keyword>
<keyword id="KW-1015">Disulfide bond</keyword>
<keyword id="KW-0524">Neurogenesis</keyword>
<keyword id="KW-1185">Reference proteome</keyword>
<keyword id="KW-0964">Secreted</keyword>
<keyword id="KW-0732">Signal</keyword>
<organism>
    <name type="scientific">Rattus norvegicus</name>
    <name type="common">Rat</name>
    <dbReference type="NCBI Taxonomy" id="10116"/>
    <lineage>
        <taxon>Eukaryota</taxon>
        <taxon>Metazoa</taxon>
        <taxon>Chordata</taxon>
        <taxon>Craniata</taxon>
        <taxon>Vertebrata</taxon>
        <taxon>Euteleostomi</taxon>
        <taxon>Mammalia</taxon>
        <taxon>Eutheria</taxon>
        <taxon>Euarchontoglires</taxon>
        <taxon>Glires</taxon>
        <taxon>Rodentia</taxon>
        <taxon>Myomorpha</taxon>
        <taxon>Muroidea</taxon>
        <taxon>Muridae</taxon>
        <taxon>Murinae</taxon>
        <taxon>Rattus</taxon>
    </lineage>
</organism>
<gene>
    <name type="primary">Metrn</name>
    <name type="synonym">Hyrac</name>
</gene>
<evidence type="ECO:0000250" key="1"/>
<evidence type="ECO:0000255" key="2">
    <source>
        <dbReference type="PROSITE-ProRule" id="PRU00114"/>
    </source>
</evidence>
<evidence type="ECO:0000305" key="3"/>
<reference key="1">
    <citation type="submission" date="2004-10" db="EMBL/GenBank/DDBJ databases">
        <authorList>
            <person name="Park J.A."/>
            <person name="Song H.S."/>
            <person name="Kim K.-W."/>
        </authorList>
    </citation>
    <scope>NUCLEOTIDE SEQUENCE [MRNA]</scope>
    <source>
        <strain>Sprague-Dawley</strain>
        <tissue>Brain</tissue>
    </source>
</reference>
<proteinExistence type="evidence at transcript level"/>
<comment type="function">
    <text evidence="1">Involved in both glial cell differentiation and axonal network formation during neurogenesis. Promotes astrocyte differentiation and transforms cerebellar astrocytes into radial glia. Also induces axonal extension in small and intermediate neurons of sensory ganglia by activating nearby satellite glia (By similarity).</text>
</comment>
<comment type="subunit">
    <text evidence="1">Monomer.</text>
</comment>
<comment type="subcellular location">
    <subcellularLocation>
        <location evidence="1">Secreted</location>
    </subcellularLocation>
</comment>
<comment type="similarity">
    <text evidence="3">Belongs to the meteorin family.</text>
</comment>
<feature type="signal peptide" evidence="1">
    <location>
        <begin position="1"/>
        <end position="21"/>
    </location>
</feature>
<feature type="chain" id="PRO_0000289103" description="Meteorin">
    <location>
        <begin position="22"/>
        <end position="291"/>
    </location>
</feature>
<feature type="disulfide bond" evidence="2">
    <location>
        <begin position="28"/>
        <end position="49"/>
    </location>
</feature>
<feature type="disulfide bond" evidence="2">
    <location>
        <begin position="80"/>
        <end position="116"/>
    </location>
</feature>
<feature type="disulfide bond" evidence="2">
    <location>
        <begin position="169"/>
        <end position="240"/>
    </location>
</feature>
<feature type="disulfide bond" evidence="2">
    <location>
        <begin position="172"/>
        <end position="264"/>
    </location>
</feature>
<feature type="disulfide bond" evidence="2">
    <location>
        <begin position="182"/>
        <end position="286"/>
    </location>
</feature>
<accession>Q5Q0T9</accession>
<name>METRN_RAT</name>
<sequence>MLVAALLCALCCGLLAASARAGYSEDRCSWRGSGLTQEPGSVGQLTLDCTEGAIEWLYPAGALRLTLGGSDPGTRPSIVCLRPTRPFAGAQVFAERMAGNLELLLAEGQGLAGGRCMRWGPRERRALFLQATPHRDISRRVAAFQFELHEDQRAEMSPQAQGFGVDGACRPCSDAELLLTACTSDFVIHGTIHGVVHDMELQESVITVVATRVIRQTLPLFQEGSSEGRGQASVRTLLRCGVRPGPGSFLFMGWSRFGEAWLGCAPRFQEFSRVYSAALAAHLNPCEVALD</sequence>